<protein>
    <recommendedName>
        <fullName evidence="2">Conotoxin Cca1669</fullName>
    </recommendedName>
</protein>
<dbReference type="GO" id="GO:0005576">
    <property type="term" value="C:extracellular region"/>
    <property type="evidence" value="ECO:0007669"/>
    <property type="project" value="UniProtKB-SubCell"/>
</dbReference>
<dbReference type="GO" id="GO:0090729">
    <property type="term" value="F:toxin activity"/>
    <property type="evidence" value="ECO:0007669"/>
    <property type="project" value="UniProtKB-KW"/>
</dbReference>
<organism>
    <name type="scientific">Conus caracteristicus</name>
    <name type="common">Characteristic cone</name>
    <dbReference type="NCBI Taxonomy" id="89440"/>
    <lineage>
        <taxon>Eukaryota</taxon>
        <taxon>Metazoa</taxon>
        <taxon>Spiralia</taxon>
        <taxon>Lophotrochozoa</taxon>
        <taxon>Mollusca</taxon>
        <taxon>Gastropoda</taxon>
        <taxon>Caenogastropoda</taxon>
        <taxon>Neogastropoda</taxon>
        <taxon>Conoidea</taxon>
        <taxon>Conidae</taxon>
        <taxon>Conus</taxon>
    </lineage>
</organism>
<name>CX69_CONCB</name>
<proteinExistence type="evidence at protein level"/>
<evidence type="ECO:0000269" key="1">
    <source>
    </source>
</evidence>
<evidence type="ECO:0000303" key="2">
    <source>
    </source>
</evidence>
<evidence type="ECO:0000305" key="3"/>
<evidence type="ECO:0000305" key="4">
    <source>
    </source>
</evidence>
<keyword id="KW-0027">Amidation</keyword>
<keyword id="KW-0903">Direct protein sequencing</keyword>
<keyword id="KW-1015">Disulfide bond</keyword>
<keyword id="KW-0964">Secreted</keyword>
<keyword id="KW-0800">Toxin</keyword>
<reference key="1">
    <citation type="journal article" date="2020" name="J. Biol. Chem.">
        <title>Structure and allosteric activity of a single-disulfide conopeptide from Conus zonatus at human alpha3beta4 and alpha7 nicotinic acetylcholine receptors.</title>
        <authorList>
            <person name="Mohan M.K."/>
            <person name="Abraham N."/>
            <person name="Rajesh P.R."/>
            <person name="Jayaseelan B.F."/>
            <person name="Ragnarsson L."/>
            <person name="Lewis R.J."/>
            <person name="Sarma S.P."/>
        </authorList>
    </citation>
    <scope>PROTEIN SEQUENCE</scope>
    <scope>AMIDATION AT GLY-14</scope>
    <scope>SYNTHESIS OF NON-AMIDATED AND AMIDATED PEPTIDE</scope>
</reference>
<comment type="function">
    <text evidence="3">Probable toxin.</text>
</comment>
<comment type="subcellular location">
    <subcellularLocation>
        <location evidence="1">Secreted</location>
    </subcellularLocation>
</comment>
<comment type="tissue specificity">
    <text evidence="4">Expressed by the venom duct.</text>
</comment>
<comment type="domain">
    <text evidence="3">The cysteine framework is C-C.</text>
</comment>
<comment type="PTM">
    <text evidence="1">Amidation at Gly-14 does not impact activity, since a non-amidated synthetic peptide shows the same absence of activity than the natural amidated peptide.</text>
</comment>
<comment type="miscellaneous">
    <text evidence="1">Negative results: does not modulate oxytocin (OXTR), vasopressin (AVPR1A and AVPR1B), NMDA (GRIN1 and GRIN2A), muscarinic (CHRM1 and CHRM3), and nicotinic acetylcholine receptors (alpha-7, and alpha-3-beta-4), and voltage-gated calcium (Cav) and sodium channels (Nav).</text>
</comment>
<accession>P0DQN0</accession>
<sequence length="14" mass="1672">RDCGKMCEEETWKG</sequence>
<feature type="peptide" id="PRO_0000450819" description="Conotoxin Cca1669" evidence="1">
    <location>
        <begin position="1"/>
        <end position="14"/>
    </location>
</feature>
<feature type="modified residue" description="Glycine amide" evidence="1">
    <location>
        <position position="14"/>
    </location>
</feature>
<feature type="disulfide bond" evidence="1">
    <location>
        <begin position="3"/>
        <end position="7"/>
    </location>
</feature>